<sequence length="307" mass="33460">MISVKVPASSANLGAGFDCMGVALKLYNIIEVEEIEKGLIITSSPDDPSIAKDENNLVFRAMKTVFDEVGWYPRGLRINLINEIPLTRGLGSSAACISGGIYAANLLCGGKLSEEEMIYLAAKMEGHPDNSTPAMIGGLVFAVLEDKKVNYIKFVVPARLKFAVFIPDFQLSTEYARNILPKYIEFKDAVFNIGRATLFASAITTGNYELLPAATQDRLHQPYRKKLIPDFDKIVNLSLEAGAKGAFLSGAGPSIIALVDENYEIFEQNVKNALASMDLVANWDFMILEADNSGATVFSVQSTSLKR</sequence>
<keyword id="KW-0028">Amino-acid biosynthesis</keyword>
<keyword id="KW-0067">ATP-binding</keyword>
<keyword id="KW-0963">Cytoplasm</keyword>
<keyword id="KW-0418">Kinase</keyword>
<keyword id="KW-0547">Nucleotide-binding</keyword>
<keyword id="KW-0791">Threonine biosynthesis</keyword>
<keyword id="KW-0808">Transferase</keyword>
<comment type="function">
    <text evidence="1">Catalyzes the ATP-dependent phosphorylation of L-homoserine to L-homoserine phosphate.</text>
</comment>
<comment type="catalytic activity">
    <reaction evidence="1">
        <text>L-homoserine + ATP = O-phospho-L-homoserine + ADP + H(+)</text>
        <dbReference type="Rhea" id="RHEA:13985"/>
        <dbReference type="ChEBI" id="CHEBI:15378"/>
        <dbReference type="ChEBI" id="CHEBI:30616"/>
        <dbReference type="ChEBI" id="CHEBI:57476"/>
        <dbReference type="ChEBI" id="CHEBI:57590"/>
        <dbReference type="ChEBI" id="CHEBI:456216"/>
        <dbReference type="EC" id="2.7.1.39"/>
    </reaction>
</comment>
<comment type="pathway">
    <text evidence="1">Amino-acid biosynthesis; L-threonine biosynthesis; L-threonine from L-aspartate: step 4/5.</text>
</comment>
<comment type="subcellular location">
    <subcellularLocation>
        <location evidence="1">Cytoplasm</location>
    </subcellularLocation>
</comment>
<comment type="similarity">
    <text evidence="1">Belongs to the GHMP kinase family. Homoserine kinase subfamily.</text>
</comment>
<evidence type="ECO:0000255" key="1">
    <source>
        <dbReference type="HAMAP-Rule" id="MF_00384"/>
    </source>
</evidence>
<proteinExistence type="inferred from homology"/>
<organism>
    <name type="scientific">Caldicellulosiruptor bescii (strain ATCC BAA-1888 / DSM 6725 / KCTC 15123 / Z-1320)</name>
    <name type="common">Anaerocellum thermophilum</name>
    <dbReference type="NCBI Taxonomy" id="521460"/>
    <lineage>
        <taxon>Bacteria</taxon>
        <taxon>Bacillati</taxon>
        <taxon>Bacillota</taxon>
        <taxon>Bacillota incertae sedis</taxon>
        <taxon>Caldicellulosiruptorales</taxon>
        <taxon>Caldicellulosiruptoraceae</taxon>
        <taxon>Caldicellulosiruptor</taxon>
    </lineage>
</organism>
<feature type="chain" id="PRO_1000134237" description="Homoserine kinase">
    <location>
        <begin position="1"/>
        <end position="307"/>
    </location>
</feature>
<feature type="binding site" evidence="1">
    <location>
        <begin position="85"/>
        <end position="95"/>
    </location>
    <ligand>
        <name>ATP</name>
        <dbReference type="ChEBI" id="CHEBI:30616"/>
    </ligand>
</feature>
<protein>
    <recommendedName>
        <fullName evidence="1">Homoserine kinase</fullName>
        <shortName evidence="1">HK</shortName>
        <shortName evidence="1">HSK</shortName>
        <ecNumber evidence="1">2.7.1.39</ecNumber>
    </recommendedName>
</protein>
<name>KHSE_CALBD</name>
<dbReference type="EC" id="2.7.1.39" evidence="1"/>
<dbReference type="EMBL" id="CP001393">
    <property type="protein sequence ID" value="ACM61047.1"/>
    <property type="molecule type" value="Genomic_DNA"/>
</dbReference>
<dbReference type="RefSeq" id="WP_015908335.1">
    <property type="nucleotide sequence ID" value="NC_012034.1"/>
</dbReference>
<dbReference type="SMR" id="B9ML57"/>
<dbReference type="STRING" id="521460.Athe_1960"/>
<dbReference type="GeneID" id="31773310"/>
<dbReference type="KEGG" id="ate:Athe_1960"/>
<dbReference type="eggNOG" id="COG0083">
    <property type="taxonomic scope" value="Bacteria"/>
</dbReference>
<dbReference type="HOGENOM" id="CLU_041243_0_2_9"/>
<dbReference type="UniPathway" id="UPA00050">
    <property type="reaction ID" value="UER00064"/>
</dbReference>
<dbReference type="Proteomes" id="UP000007723">
    <property type="component" value="Chromosome"/>
</dbReference>
<dbReference type="GO" id="GO:0005737">
    <property type="term" value="C:cytoplasm"/>
    <property type="evidence" value="ECO:0007669"/>
    <property type="project" value="UniProtKB-SubCell"/>
</dbReference>
<dbReference type="GO" id="GO:0005524">
    <property type="term" value="F:ATP binding"/>
    <property type="evidence" value="ECO:0007669"/>
    <property type="project" value="UniProtKB-UniRule"/>
</dbReference>
<dbReference type="GO" id="GO:0004413">
    <property type="term" value="F:homoserine kinase activity"/>
    <property type="evidence" value="ECO:0007669"/>
    <property type="project" value="UniProtKB-UniRule"/>
</dbReference>
<dbReference type="GO" id="GO:0009088">
    <property type="term" value="P:threonine biosynthetic process"/>
    <property type="evidence" value="ECO:0007669"/>
    <property type="project" value="UniProtKB-UniRule"/>
</dbReference>
<dbReference type="Gene3D" id="3.30.230.10">
    <property type="match status" value="1"/>
</dbReference>
<dbReference type="Gene3D" id="3.30.70.890">
    <property type="entry name" value="GHMP kinase, C-terminal domain"/>
    <property type="match status" value="1"/>
</dbReference>
<dbReference type="HAMAP" id="MF_00384">
    <property type="entry name" value="Homoser_kinase"/>
    <property type="match status" value="1"/>
</dbReference>
<dbReference type="InterPro" id="IPR013750">
    <property type="entry name" value="GHMP_kinase_C_dom"/>
</dbReference>
<dbReference type="InterPro" id="IPR036554">
    <property type="entry name" value="GHMP_kinase_C_sf"/>
</dbReference>
<dbReference type="InterPro" id="IPR006204">
    <property type="entry name" value="GHMP_kinase_N_dom"/>
</dbReference>
<dbReference type="InterPro" id="IPR006203">
    <property type="entry name" value="GHMP_knse_ATP-bd_CS"/>
</dbReference>
<dbReference type="InterPro" id="IPR000870">
    <property type="entry name" value="Homoserine_kinase"/>
</dbReference>
<dbReference type="InterPro" id="IPR020568">
    <property type="entry name" value="Ribosomal_Su5_D2-typ_SF"/>
</dbReference>
<dbReference type="InterPro" id="IPR014721">
    <property type="entry name" value="Ribsml_uS5_D2-typ_fold_subgr"/>
</dbReference>
<dbReference type="NCBIfam" id="NF002288">
    <property type="entry name" value="PRK01212.1-4"/>
    <property type="match status" value="1"/>
</dbReference>
<dbReference type="NCBIfam" id="TIGR00191">
    <property type="entry name" value="thrB"/>
    <property type="match status" value="1"/>
</dbReference>
<dbReference type="PANTHER" id="PTHR20861:SF1">
    <property type="entry name" value="HOMOSERINE KINASE"/>
    <property type="match status" value="1"/>
</dbReference>
<dbReference type="PANTHER" id="PTHR20861">
    <property type="entry name" value="HOMOSERINE/4-DIPHOSPHOCYTIDYL-2-C-METHYL-D-ERYTHRITOL KINASE"/>
    <property type="match status" value="1"/>
</dbReference>
<dbReference type="Pfam" id="PF08544">
    <property type="entry name" value="GHMP_kinases_C"/>
    <property type="match status" value="1"/>
</dbReference>
<dbReference type="Pfam" id="PF00288">
    <property type="entry name" value="GHMP_kinases_N"/>
    <property type="match status" value="1"/>
</dbReference>
<dbReference type="PIRSF" id="PIRSF000676">
    <property type="entry name" value="Homoser_kin"/>
    <property type="match status" value="1"/>
</dbReference>
<dbReference type="PRINTS" id="PR00958">
    <property type="entry name" value="HOMSERKINASE"/>
</dbReference>
<dbReference type="SUPFAM" id="SSF55060">
    <property type="entry name" value="GHMP Kinase, C-terminal domain"/>
    <property type="match status" value="1"/>
</dbReference>
<dbReference type="SUPFAM" id="SSF54211">
    <property type="entry name" value="Ribosomal protein S5 domain 2-like"/>
    <property type="match status" value="1"/>
</dbReference>
<dbReference type="PROSITE" id="PS00627">
    <property type="entry name" value="GHMP_KINASES_ATP"/>
    <property type="match status" value="1"/>
</dbReference>
<accession>B9ML57</accession>
<reference key="1">
    <citation type="submission" date="2009-01" db="EMBL/GenBank/DDBJ databases">
        <title>Complete sequence of chromosome of Caldicellulosiruptor becscii DSM 6725.</title>
        <authorList>
            <person name="Lucas S."/>
            <person name="Copeland A."/>
            <person name="Lapidus A."/>
            <person name="Glavina del Rio T."/>
            <person name="Tice H."/>
            <person name="Bruce D."/>
            <person name="Goodwin L."/>
            <person name="Pitluck S."/>
            <person name="Sims D."/>
            <person name="Meincke L."/>
            <person name="Brettin T."/>
            <person name="Detter J.C."/>
            <person name="Han C."/>
            <person name="Larimer F."/>
            <person name="Land M."/>
            <person name="Hauser L."/>
            <person name="Kyrpides N."/>
            <person name="Ovchinnikova G."/>
            <person name="Kataeva I."/>
            <person name="Adams M.W.W."/>
        </authorList>
    </citation>
    <scope>NUCLEOTIDE SEQUENCE [LARGE SCALE GENOMIC DNA]</scope>
    <source>
        <strain>ATCC BAA-1888 / DSM 6725 / KCTC 15123 / Z-1320</strain>
    </source>
</reference>
<gene>
    <name evidence="1" type="primary">thrB</name>
    <name type="ordered locus">Athe_1960</name>
</gene>